<keyword id="KW-0963">Cytoplasm</keyword>
<keyword id="KW-1185">Reference proteome</keyword>
<keyword id="KW-0690">Ribosome biogenesis</keyword>
<protein>
    <recommendedName>
        <fullName evidence="1">Ribosome maturation factor RimP</fullName>
    </recommendedName>
</protein>
<dbReference type="EMBL" id="AE016828">
    <property type="protein sequence ID" value="AAO90931.1"/>
    <property type="molecule type" value="Genomic_DNA"/>
</dbReference>
<dbReference type="RefSeq" id="NP_820417.1">
    <property type="nucleotide sequence ID" value="NC_002971.3"/>
</dbReference>
<dbReference type="RefSeq" id="WP_010958225.1">
    <property type="nucleotide sequence ID" value="NC_002971.4"/>
</dbReference>
<dbReference type="SMR" id="Q83BR9"/>
<dbReference type="STRING" id="227377.CBU_1434"/>
<dbReference type="DNASU" id="1209340"/>
<dbReference type="EnsemblBacteria" id="AAO90931">
    <property type="protein sequence ID" value="AAO90931"/>
    <property type="gene ID" value="CBU_1434"/>
</dbReference>
<dbReference type="GeneID" id="1209340"/>
<dbReference type="KEGG" id="cbu:CBU_1434"/>
<dbReference type="PATRIC" id="fig|227377.7.peg.1433"/>
<dbReference type="eggNOG" id="COG0779">
    <property type="taxonomic scope" value="Bacteria"/>
</dbReference>
<dbReference type="HOGENOM" id="CLU_070525_1_1_6"/>
<dbReference type="OrthoDB" id="9805006at2"/>
<dbReference type="Proteomes" id="UP000002671">
    <property type="component" value="Chromosome"/>
</dbReference>
<dbReference type="GO" id="GO:0005829">
    <property type="term" value="C:cytosol"/>
    <property type="evidence" value="ECO:0000318"/>
    <property type="project" value="GO_Central"/>
</dbReference>
<dbReference type="GO" id="GO:0000028">
    <property type="term" value="P:ribosomal small subunit assembly"/>
    <property type="evidence" value="ECO:0000318"/>
    <property type="project" value="GO_Central"/>
</dbReference>
<dbReference type="GO" id="GO:0006412">
    <property type="term" value="P:translation"/>
    <property type="evidence" value="ECO:0000318"/>
    <property type="project" value="GO_Central"/>
</dbReference>
<dbReference type="CDD" id="cd01734">
    <property type="entry name" value="YlxS_C"/>
    <property type="match status" value="1"/>
</dbReference>
<dbReference type="FunFam" id="3.30.300.70:FF:000001">
    <property type="entry name" value="Ribosome maturation factor RimP"/>
    <property type="match status" value="1"/>
</dbReference>
<dbReference type="Gene3D" id="2.30.30.180">
    <property type="entry name" value="Ribosome maturation factor RimP, C-terminal domain"/>
    <property type="match status" value="1"/>
</dbReference>
<dbReference type="Gene3D" id="3.30.300.70">
    <property type="entry name" value="RimP-like superfamily, N-terminal"/>
    <property type="match status" value="1"/>
</dbReference>
<dbReference type="HAMAP" id="MF_01077">
    <property type="entry name" value="RimP"/>
    <property type="match status" value="1"/>
</dbReference>
<dbReference type="InterPro" id="IPR003728">
    <property type="entry name" value="Ribosome_maturation_RimP"/>
</dbReference>
<dbReference type="InterPro" id="IPR028998">
    <property type="entry name" value="RimP_C"/>
</dbReference>
<dbReference type="InterPro" id="IPR036847">
    <property type="entry name" value="RimP_C_sf"/>
</dbReference>
<dbReference type="InterPro" id="IPR028989">
    <property type="entry name" value="RimP_N"/>
</dbReference>
<dbReference type="InterPro" id="IPR035956">
    <property type="entry name" value="RimP_N_sf"/>
</dbReference>
<dbReference type="NCBIfam" id="NF000927">
    <property type="entry name" value="PRK00092.1-1"/>
    <property type="match status" value="1"/>
</dbReference>
<dbReference type="PANTHER" id="PTHR33867">
    <property type="entry name" value="RIBOSOME MATURATION FACTOR RIMP"/>
    <property type="match status" value="1"/>
</dbReference>
<dbReference type="PANTHER" id="PTHR33867:SF1">
    <property type="entry name" value="RIBOSOME MATURATION FACTOR RIMP"/>
    <property type="match status" value="1"/>
</dbReference>
<dbReference type="Pfam" id="PF17384">
    <property type="entry name" value="DUF150_C"/>
    <property type="match status" value="1"/>
</dbReference>
<dbReference type="Pfam" id="PF02576">
    <property type="entry name" value="RimP_N"/>
    <property type="match status" value="1"/>
</dbReference>
<dbReference type="SUPFAM" id="SSF74942">
    <property type="entry name" value="YhbC-like, C-terminal domain"/>
    <property type="match status" value="1"/>
</dbReference>
<dbReference type="SUPFAM" id="SSF75420">
    <property type="entry name" value="YhbC-like, N-terminal domain"/>
    <property type="match status" value="1"/>
</dbReference>
<proteinExistence type="inferred from homology"/>
<comment type="function">
    <text evidence="1">Required for maturation of 30S ribosomal subunits.</text>
</comment>
<comment type="subcellular location">
    <subcellularLocation>
        <location evidence="1">Cytoplasm</location>
    </subcellularLocation>
</comment>
<comment type="similarity">
    <text evidence="1">Belongs to the RimP family.</text>
</comment>
<name>RIMP_COXBU</name>
<reference key="1">
    <citation type="journal article" date="2003" name="Proc. Natl. Acad. Sci. U.S.A.">
        <title>Complete genome sequence of the Q-fever pathogen, Coxiella burnetii.</title>
        <authorList>
            <person name="Seshadri R."/>
            <person name="Paulsen I.T."/>
            <person name="Eisen J.A."/>
            <person name="Read T.D."/>
            <person name="Nelson K.E."/>
            <person name="Nelson W.C."/>
            <person name="Ward N.L."/>
            <person name="Tettelin H."/>
            <person name="Davidsen T.M."/>
            <person name="Beanan M.J."/>
            <person name="DeBoy R.T."/>
            <person name="Daugherty S.C."/>
            <person name="Brinkac L.M."/>
            <person name="Madupu R."/>
            <person name="Dodson R.J."/>
            <person name="Khouri H.M."/>
            <person name="Lee K.H."/>
            <person name="Carty H.A."/>
            <person name="Scanlan D."/>
            <person name="Heinzen R.A."/>
            <person name="Thompson H.A."/>
            <person name="Samuel J.E."/>
            <person name="Fraser C.M."/>
            <person name="Heidelberg J.F."/>
        </authorList>
    </citation>
    <scope>NUCLEOTIDE SEQUENCE [LARGE SCALE GENOMIC DNA]</scope>
    <source>
        <strain>RSA 493 / Nine Mile phase I</strain>
    </source>
</reference>
<evidence type="ECO:0000255" key="1">
    <source>
        <dbReference type="HAMAP-Rule" id="MF_01077"/>
    </source>
</evidence>
<gene>
    <name evidence="1" type="primary">rimP</name>
    <name type="ordered locus">CBU_1434</name>
</gene>
<sequence length="153" mass="17105">MSQARTLHRLIAPAVEALGFELVGCELFRRGATTILQVFVDKPGGIGLDECAKVSRQISAVLDVEDPIRGRYTLEVSSPGLERPLYTANHYRRFIGNKAKIRLREPREGQRQFRGMVVAVDNEEQVTLQLDNKILKVSLGEIEKANLIADFEG</sequence>
<feature type="chain" id="PRO_0000181866" description="Ribosome maturation factor RimP">
    <location>
        <begin position="1"/>
        <end position="153"/>
    </location>
</feature>
<accession>Q83BR9</accession>
<organism>
    <name type="scientific">Coxiella burnetii (strain RSA 493 / Nine Mile phase I)</name>
    <dbReference type="NCBI Taxonomy" id="227377"/>
    <lineage>
        <taxon>Bacteria</taxon>
        <taxon>Pseudomonadati</taxon>
        <taxon>Pseudomonadota</taxon>
        <taxon>Gammaproteobacteria</taxon>
        <taxon>Legionellales</taxon>
        <taxon>Coxiellaceae</taxon>
        <taxon>Coxiella</taxon>
    </lineage>
</organism>